<dbReference type="EMBL" id="AL123456">
    <property type="protein sequence ID" value="CCP43856.1"/>
    <property type="molecule type" value="Genomic_DNA"/>
</dbReference>
<dbReference type="PIR" id="E70897">
    <property type="entry name" value="E70897"/>
</dbReference>
<dbReference type="RefSeq" id="NP_215619.1">
    <property type="nucleotide sequence ID" value="NC_000962.3"/>
</dbReference>
<dbReference type="RefSeq" id="WP_003405836.1">
    <property type="nucleotide sequence ID" value="NZ_NVQJ01000021.1"/>
</dbReference>
<dbReference type="SMR" id="O53451"/>
<dbReference type="FunCoup" id="O53451">
    <property type="interactions" value="1"/>
</dbReference>
<dbReference type="STRING" id="83332.Rv1103c"/>
<dbReference type="PaxDb" id="83332-Rv1103c"/>
<dbReference type="DNASU" id="885941"/>
<dbReference type="GeneID" id="45425079"/>
<dbReference type="GeneID" id="885941"/>
<dbReference type="KEGG" id="mtu:Rv1103c"/>
<dbReference type="KEGG" id="mtv:RVBD_1103c"/>
<dbReference type="TubercuList" id="Rv1103c"/>
<dbReference type="eggNOG" id="ENOG50339Z8">
    <property type="taxonomic scope" value="Bacteria"/>
</dbReference>
<dbReference type="InParanoid" id="O53451"/>
<dbReference type="OrthoDB" id="3541837at2"/>
<dbReference type="Proteomes" id="UP000001584">
    <property type="component" value="Chromosome"/>
</dbReference>
<dbReference type="GO" id="GO:0097351">
    <property type="term" value="F:toxin sequestering activity"/>
    <property type="evidence" value="ECO:0000353"/>
    <property type="project" value="MTBBASE"/>
</dbReference>
<dbReference type="GO" id="GO:0098754">
    <property type="term" value="P:detoxification"/>
    <property type="evidence" value="ECO:0000315"/>
    <property type="project" value="MTBBASE"/>
</dbReference>
<dbReference type="GO" id="GO:0045926">
    <property type="term" value="P:negative regulation of growth"/>
    <property type="evidence" value="ECO:0000315"/>
    <property type="project" value="MTBBASE"/>
</dbReference>
<dbReference type="NCBIfam" id="NF041551">
    <property type="entry name" value="YlcI_YnfO_N"/>
    <property type="match status" value="1"/>
</dbReference>
<gene>
    <name type="primary">mazE3</name>
    <name evidence="6" type="synonym">mazE-mt6</name>
    <name type="ordered locus">Rv1103c</name>
</gene>
<name>MAZE3_MYCTU</name>
<organism>
    <name type="scientific">Mycobacterium tuberculosis (strain ATCC 25618 / H37Rv)</name>
    <dbReference type="NCBI Taxonomy" id="83332"/>
    <lineage>
        <taxon>Bacteria</taxon>
        <taxon>Bacillati</taxon>
        <taxon>Actinomycetota</taxon>
        <taxon>Actinomycetes</taxon>
        <taxon>Mycobacteriales</taxon>
        <taxon>Mycobacteriaceae</taxon>
        <taxon>Mycobacterium</taxon>
        <taxon>Mycobacterium tuberculosis complex</taxon>
    </lineage>
</organism>
<keyword id="KW-1185">Reference proteome</keyword>
<keyword id="KW-1277">Toxin-antitoxin system</keyword>
<comment type="function">
    <text evidence="1 2 3 4">Antitoxin component of a type II toxin-antitoxin (TA) system. Upon expression in E.coli and M.smegmatis neutralizes the effect of cognate toxin MazF3. Overexpression of MazE3 alone decreased persister cells formation in M.smegmatis upon challenge with gentamicin or kanamycin.</text>
</comment>
<comment type="subunit">
    <text evidence="3 5">Forms a complex with cognate toxin MazF3, possibly with 1:1 stoichiometry.</text>
</comment>
<comment type="induction">
    <text evidence="5">Mildly induced (about 4-fold) when grown in a non-replicating state.</text>
</comment>
<proteinExistence type="evidence at protein level"/>
<evidence type="ECO:0000269" key="1">
    <source>
    </source>
</evidence>
<evidence type="ECO:0000269" key="2">
    <source>
    </source>
</evidence>
<evidence type="ECO:0000269" key="3">
    <source>
    </source>
</evidence>
<evidence type="ECO:0000269" key="4">
    <source>
    </source>
</evidence>
<evidence type="ECO:0000269" key="5">
    <source>
    </source>
</evidence>
<evidence type="ECO:0000303" key="6">
    <source>
    </source>
</evidence>
<evidence type="ECO:0000305" key="7"/>
<reference key="1">
    <citation type="journal article" date="1998" name="Nature">
        <title>Deciphering the biology of Mycobacterium tuberculosis from the complete genome sequence.</title>
        <authorList>
            <person name="Cole S.T."/>
            <person name="Brosch R."/>
            <person name="Parkhill J."/>
            <person name="Garnier T."/>
            <person name="Churcher C.M."/>
            <person name="Harris D.E."/>
            <person name="Gordon S.V."/>
            <person name="Eiglmeier K."/>
            <person name="Gas S."/>
            <person name="Barry C.E. III"/>
            <person name="Tekaia F."/>
            <person name="Badcock K."/>
            <person name="Basham D."/>
            <person name="Brown D."/>
            <person name="Chillingworth T."/>
            <person name="Connor R."/>
            <person name="Davies R.M."/>
            <person name="Devlin K."/>
            <person name="Feltwell T."/>
            <person name="Gentles S."/>
            <person name="Hamlin N."/>
            <person name="Holroyd S."/>
            <person name="Hornsby T."/>
            <person name="Jagels K."/>
            <person name="Krogh A."/>
            <person name="McLean J."/>
            <person name="Moule S."/>
            <person name="Murphy L.D."/>
            <person name="Oliver S."/>
            <person name="Osborne J."/>
            <person name="Quail M.A."/>
            <person name="Rajandream M.A."/>
            <person name="Rogers J."/>
            <person name="Rutter S."/>
            <person name="Seeger K."/>
            <person name="Skelton S."/>
            <person name="Squares S."/>
            <person name="Squares R."/>
            <person name="Sulston J.E."/>
            <person name="Taylor K."/>
            <person name="Whitehead S."/>
            <person name="Barrell B.G."/>
        </authorList>
    </citation>
    <scope>NUCLEOTIDE SEQUENCE [LARGE SCALE GENOMIC DNA]</scope>
    <source>
        <strain>ATCC 25618 / H37Rv</strain>
    </source>
</reference>
<reference key="2">
    <citation type="journal article" date="2005" name="Nucleic Acids Res.">
        <title>Toxin-antitoxin loci are highly abundant in free-living but lost from host-associated prokaryotes.</title>
        <authorList>
            <person name="Pandey D.P."/>
            <person name="Gerdes K."/>
        </authorList>
    </citation>
    <scope>IDENTIFICATION</scope>
    <scope>POSSIBLE FUNCTION</scope>
    <source>
        <strain>ATCC 25618 / H37Rv</strain>
    </source>
</reference>
<reference key="3">
    <citation type="journal article" date="2006" name="J. Biol. Chem.">
        <title>Characterization of mRNA interferases from Mycobacterium tuberculosis.</title>
        <authorList>
            <person name="Zhu L."/>
            <person name="Zhang Y."/>
            <person name="Teh J.S."/>
            <person name="Zhang J."/>
            <person name="Connell N."/>
            <person name="Rubin H."/>
            <person name="Inouye M."/>
        </authorList>
    </citation>
    <scope>GENE NAME</scope>
    <scope>POSSIBLE FUNCTION</scope>
    <source>
        <strain>ATCC 25618 / H37Rv</strain>
    </source>
</reference>
<reference key="4">
    <citation type="journal article" date="2009" name="FEMS Microbiol. Lett.">
        <title>Killing activity and rescue function of genome-wide toxin-antitoxin loci of Mycobacterium tuberculosis.</title>
        <authorList>
            <person name="Gupta A."/>
        </authorList>
    </citation>
    <scope>EXPRESSION IN E.COLI</scope>
    <scope>FUNCTION AS AN ANTITOXIN</scope>
    <source>
        <strain>ATCC 25618 / H37Rv</strain>
    </source>
</reference>
<reference key="5">
    <citation type="journal article" date="2009" name="PLoS Genet.">
        <title>Comprehensive functional analysis of Mycobacterium tuberculosis toxin-antitoxin systems: implications for pathogenesis, stress responses, and evolution.</title>
        <authorList>
            <person name="Ramage H.R."/>
            <person name="Connolly L.E."/>
            <person name="Cox J.S."/>
        </authorList>
    </citation>
    <scope>EXPRESSION IN M.SMEGMATIS</scope>
    <scope>FUNCTION AS AN ANTITOXIN</scope>
    <source>
        <strain>ATCC 35801 / TMC 107 / Erdman</strain>
    </source>
</reference>
<reference key="6">
    <citation type="journal article" date="2010" name="Biochem. Biophys. Res. Commun.">
        <title>Characterization of a chromosomal toxin-antitoxin, Rv1102c-Rv1103c system in Mycobacterium tuberculosis.</title>
        <authorList>
            <person name="Han J.S."/>
            <person name="Lee J.J."/>
            <person name="Anandan T."/>
            <person name="Zeng M."/>
            <person name="Sripathi S."/>
            <person name="Jahng W.J."/>
            <person name="Lee S.H."/>
            <person name="Suh J.W."/>
            <person name="Kang C.M."/>
        </authorList>
    </citation>
    <scope>IDENTIFICATION BY MASS SPECTROMETRY</scope>
    <scope>EXPRESSION IN E.COLI</scope>
    <scope>EXPRESSION IN M.SMEGMATIS</scope>
    <scope>FUNCTION AS AN ANTITOXIN</scope>
    <scope>SUBUNIT</scope>
    <source>
        <strain>ATCC 25618 / H37Rv</strain>
    </source>
</reference>
<reference key="7">
    <citation type="journal article" date="2011" name="Mol. Cell. Proteomics">
        <title>Proteogenomic analysis of Mycobacterium tuberculosis by high resolution mass spectrometry.</title>
        <authorList>
            <person name="Kelkar D.S."/>
            <person name="Kumar D."/>
            <person name="Kumar P."/>
            <person name="Balakrishnan L."/>
            <person name="Muthusamy B."/>
            <person name="Yadav A.K."/>
            <person name="Shrivastava P."/>
            <person name="Marimuthu A."/>
            <person name="Anand S."/>
            <person name="Sundaram H."/>
            <person name="Kingsbury R."/>
            <person name="Harsha H.C."/>
            <person name="Nair B."/>
            <person name="Prasad T.S."/>
            <person name="Chauhan D.S."/>
            <person name="Katoch K."/>
            <person name="Katoch V.M."/>
            <person name="Kumar P."/>
            <person name="Chaerkady R."/>
            <person name="Ramachandran S."/>
            <person name="Dash D."/>
            <person name="Pandey A."/>
        </authorList>
    </citation>
    <scope>IDENTIFICATION BY MASS SPECTROMETRY [LARGE SCALE ANALYSIS]</scope>
    <source>
        <strain>ATCC 25618 / H37Rv</strain>
    </source>
</reference>
<reference key="8">
    <citation type="journal article" date="2013" name="Proc. Natl. Acad. Sci. U.S.A.">
        <title>Mycobacterial toxin MazF-mt6 inhibits translation through cleavage of 23S rRNA at the ribosomal A site.</title>
        <authorList>
            <person name="Schifano J.M."/>
            <person name="Edifor R."/>
            <person name="Sharp J.D."/>
            <person name="Ouyang M."/>
            <person name="Konkimalla A."/>
            <person name="Husson R.N."/>
            <person name="Woychik N.A."/>
        </authorList>
    </citation>
    <scope>FUNCTION</scope>
    <source>
        <strain>H37Rv</strain>
    </source>
</reference>
<reference key="9">
    <citation type="journal article" date="2015" name="Nat. Commun.">
        <title>MazF ribonucleases promote Mycobacterium tuberculosis drug tolerance and virulence in guinea pigs.</title>
        <authorList>
            <person name="Tiwari P."/>
            <person name="Arora G."/>
            <person name="Singh M."/>
            <person name="Kidwai S."/>
            <person name="Narayan O.P."/>
            <person name="Singh R."/>
        </authorList>
    </citation>
    <scope>INTERACTION WITH MAZF3</scope>
    <scope>INDUCTION</scope>
    <source>
        <strain>H37Rv</strain>
    </source>
</reference>
<accession>O53451</accession>
<accession>L0T5V0</accession>
<protein>
    <recommendedName>
        <fullName evidence="7">Antitoxin MazE3</fullName>
    </recommendedName>
</protein>
<feature type="chain" id="PRO_0000406298" description="Antitoxin MazE3">
    <location>
        <begin position="1"/>
        <end position="106"/>
    </location>
</feature>
<sequence>MYLPWGVVLAGGANGFGAGAYQTGTICEVSTQIAVRLPDEIVAFIDDEVRGQHARSRAAVVLRALERERRRRLAERDAEILATNTSATGDLDTLAGHCARTALDID</sequence>